<proteinExistence type="evidence at protein level"/>
<dbReference type="EMBL" id="AY459348">
    <property type="protein sequence ID" value="AAR23240.1"/>
    <property type="molecule type" value="mRNA"/>
</dbReference>
<dbReference type="EMBL" id="EU089958">
    <property type="protein sequence ID" value="ABU50845.1"/>
    <property type="molecule type" value="mRNA"/>
</dbReference>
<dbReference type="EMBL" id="AK132579">
    <property type="protein sequence ID" value="BAE21241.1"/>
    <property type="molecule type" value="mRNA"/>
</dbReference>
<dbReference type="EMBL" id="BC049243">
    <property type="protein sequence ID" value="AAH49243.1"/>
    <property type="molecule type" value="mRNA"/>
</dbReference>
<dbReference type="EMBL" id="BC092073">
    <property type="protein sequence ID" value="AAH92073.1"/>
    <property type="molecule type" value="mRNA"/>
</dbReference>
<dbReference type="EMBL" id="BC055490">
    <property type="protein sequence ID" value="AAH55490.1"/>
    <property type="status" value="ALT_INIT"/>
    <property type="molecule type" value="mRNA"/>
</dbReference>
<dbReference type="EMBL" id="BC069958">
    <property type="protein sequence ID" value="AAH69958.1"/>
    <property type="molecule type" value="mRNA"/>
</dbReference>
<dbReference type="CCDS" id="CCDS27762.1">
    <molecule id="Q6JHY2-1"/>
</dbReference>
<dbReference type="RefSeq" id="NP_945121.1">
    <molecule id="Q6JHY2-1"/>
    <property type="nucleotide sequence ID" value="NM_198927.3"/>
</dbReference>
<dbReference type="STRING" id="10090.ENSMUSP00000085915"/>
<dbReference type="GlyCosmos" id="Q6JHY2">
    <property type="glycosylation" value="10 sites, No reported glycans"/>
</dbReference>
<dbReference type="GlyGen" id="Q6JHY2">
    <property type="glycosylation" value="10 sites"/>
</dbReference>
<dbReference type="iPTMnet" id="Q6JHY2"/>
<dbReference type="PhosphoSitePlus" id="Q6JHY2"/>
<dbReference type="PaxDb" id="10090-ENSMUSP00000085915"/>
<dbReference type="ProteomicsDB" id="261265">
    <molecule id="Q6JHY2-1"/>
</dbReference>
<dbReference type="ProteomicsDB" id="261266">
    <molecule id="Q6JHY2-2"/>
</dbReference>
<dbReference type="ProteomicsDB" id="261267">
    <molecule id="Q6JHY2-3"/>
</dbReference>
<dbReference type="ProteomicsDB" id="261268">
    <molecule id="Q6JHY2-4"/>
</dbReference>
<dbReference type="ProteomicsDB" id="261269">
    <molecule id="Q6JHY2-5"/>
</dbReference>
<dbReference type="DNASU" id="223809"/>
<dbReference type="Ensembl" id="ENSMUST00000088555.10">
    <molecule id="Q6JHY2-1"/>
    <property type="protein sequence ID" value="ENSMUSP00000085915.4"/>
    <property type="gene ID" value="ENSMUSG00000047295.17"/>
</dbReference>
<dbReference type="Ensembl" id="ENSMUST00000100293.9">
    <molecule id="Q6JHY2-2"/>
    <property type="protein sequence ID" value="ENSMUSP00000097866.3"/>
    <property type="gene ID" value="ENSMUSG00000047295.17"/>
</dbReference>
<dbReference type="Ensembl" id="ENSMUST00000109277.8">
    <molecule id="Q6JHY2-4"/>
    <property type="protein sequence ID" value="ENSMUSP00000104900.2"/>
    <property type="gene ID" value="ENSMUSG00000047295.17"/>
</dbReference>
<dbReference type="GeneID" id="223809"/>
<dbReference type="KEGG" id="mmu:223809"/>
<dbReference type="UCSC" id="uc007xic.1">
    <molecule id="Q6JHY2-1"/>
    <property type="organism name" value="mouse"/>
</dbReference>
<dbReference type="UCSC" id="uc007xid.1">
    <molecule id="Q6JHY2-4"/>
    <property type="organism name" value="mouse"/>
</dbReference>
<dbReference type="UCSC" id="uc011zxz.1">
    <molecule id="Q6JHY2-2"/>
    <property type="organism name" value="mouse"/>
</dbReference>
<dbReference type="UCSC" id="uc011zya.1">
    <molecule id="Q6JHY2-3"/>
    <property type="organism name" value="mouse"/>
</dbReference>
<dbReference type="UCSC" id="uc011zyb.1">
    <molecule id="Q6JHY2-5"/>
    <property type="organism name" value="mouse"/>
</dbReference>
<dbReference type="AGR" id="MGI:1859618"/>
<dbReference type="CTD" id="223809"/>
<dbReference type="MGI" id="MGI:1859618">
    <property type="gene designation" value="Smgc"/>
</dbReference>
<dbReference type="VEuPathDB" id="HostDB:ENSMUSG00000047295"/>
<dbReference type="GeneTree" id="ENSGT00680000100886"/>
<dbReference type="HOGENOM" id="CLU_407649_0_0_1"/>
<dbReference type="InParanoid" id="Q6JHY2"/>
<dbReference type="PhylomeDB" id="Q6JHY2"/>
<dbReference type="BioGRID-ORCS" id="223809">
    <property type="hits" value="1 hit in 76 CRISPR screens"/>
</dbReference>
<dbReference type="ChiTaRS" id="Muc19">
    <property type="organism name" value="mouse"/>
</dbReference>
<dbReference type="Proteomes" id="UP000000589">
    <property type="component" value="Chromosome 15"/>
</dbReference>
<dbReference type="RNAct" id="Q6JHY2">
    <property type="molecule type" value="protein"/>
</dbReference>
<dbReference type="Bgee" id="ENSMUSG00000047295">
    <property type="expression patterns" value="Expressed in submandibular gland and 17 other cell types or tissues"/>
</dbReference>
<dbReference type="ExpressionAtlas" id="Q6JHY2">
    <property type="expression patterns" value="baseline and differential"/>
</dbReference>
<dbReference type="GO" id="GO:0005576">
    <property type="term" value="C:extracellular region"/>
    <property type="evidence" value="ECO:0007669"/>
    <property type="project" value="UniProtKB-SubCell"/>
</dbReference>
<sequence length="733" mass="74383">MKLILLYLAVVLCFVGKARSFRNGAGFYTSLGGQMRVFDFNKKTLDAKSSGGSKDYNLSDGGKSNSRKNLSPATGGSATQQSNLDDSHAPNLGKSETMLSLLGYLGAFRPVLSGLTSLPRVGGGAHGNIGLRAEISRNGVNLSGDSSARGSLNVNPLSGLSTKSGNDATVQGQQAAASGGSKHNVENSSLSTGSATSNKGADKPSEHLSNLFLKGLKGIVEPITSAAGGSVSSAVENLKAQIKKFIEPLTEDHGPTSTSASVSGDSSTSSRLDGHSSDGLSKVSGDDPTVQGHDVAASDGSKQNVEDSTLSTGSATSNEGDDKSSDNSSNTFREDLEKILEQITSAPGGSVSSAVENLKAQIKKFIEPLTEDHGPTSTSASVSGDSSTSSRLDGHSSDGLSKVSGDDPTVQGHDVAASDGSKQNVEDSTLSTGSATSNEGDDKSSDNSSNTFREDLEKILEQITSAPGGSVSTVNNPDEDRLISIIENLAGHIQQSVTEASQSAERPNAQSSNNLSGKLEPKYENPTNGSSSASSADKPYEEGMRKLLKFLEEQYGQTGTDASVSGMSSESSRSNVHLSDGFSMESGDDATVQGQQAAASGGPKQNVESSNSSTGSATSNGGGDSNEVRGPSSSAVDSTDSGDRGNLADKQGPGFNGPEGVGENNGGSFRAGSLDTGSKSDSGSHNLSSGSGSRSNVSTGGEPSDKNEPADPGVSGRVTCPTGKTQSGSPSVA</sequence>
<keyword id="KW-0025">Alternative splicing</keyword>
<keyword id="KW-0325">Glycoprotein</keyword>
<keyword id="KW-1185">Reference proteome</keyword>
<keyword id="KW-0964">Secreted</keyword>
<keyword id="KW-0732">Signal</keyword>
<feature type="signal peptide" evidence="1">
    <location>
        <begin position="1"/>
        <end position="20"/>
    </location>
</feature>
<feature type="chain" id="PRO_5000092417" description="Submandibular gland protein C">
    <location>
        <begin position="21"/>
        <end position="733"/>
    </location>
</feature>
<feature type="region of interest" description="Disordered" evidence="2">
    <location>
        <begin position="48"/>
        <end position="91"/>
    </location>
</feature>
<feature type="region of interest" description="Disordered" evidence="2">
    <location>
        <begin position="172"/>
        <end position="204"/>
    </location>
</feature>
<feature type="region of interest" description="Disordered" evidence="2">
    <location>
        <begin position="249"/>
        <end position="330"/>
    </location>
</feature>
<feature type="region of interest" description="Disordered" evidence="2">
    <location>
        <begin position="369"/>
        <end position="450"/>
    </location>
</feature>
<feature type="region of interest" description="Disordered" evidence="2">
    <location>
        <begin position="496"/>
        <end position="733"/>
    </location>
</feature>
<feature type="compositionally biased region" description="Polar residues" evidence="2">
    <location>
        <begin position="62"/>
        <end position="84"/>
    </location>
</feature>
<feature type="compositionally biased region" description="Polar residues" evidence="2">
    <location>
        <begin position="186"/>
        <end position="199"/>
    </location>
</feature>
<feature type="compositionally biased region" description="Low complexity" evidence="2">
    <location>
        <begin position="256"/>
        <end position="270"/>
    </location>
</feature>
<feature type="compositionally biased region" description="Polar residues" evidence="2">
    <location>
        <begin position="300"/>
        <end position="318"/>
    </location>
</feature>
<feature type="compositionally biased region" description="Low complexity" evidence="2">
    <location>
        <begin position="376"/>
        <end position="390"/>
    </location>
</feature>
<feature type="compositionally biased region" description="Polar residues" evidence="2">
    <location>
        <begin position="420"/>
        <end position="438"/>
    </location>
</feature>
<feature type="compositionally biased region" description="Polar residues" evidence="2">
    <location>
        <begin position="496"/>
        <end position="516"/>
    </location>
</feature>
<feature type="compositionally biased region" description="Polar residues" evidence="2">
    <location>
        <begin position="525"/>
        <end position="535"/>
    </location>
</feature>
<feature type="compositionally biased region" description="Basic and acidic residues" evidence="2">
    <location>
        <begin position="538"/>
        <end position="552"/>
    </location>
</feature>
<feature type="compositionally biased region" description="Low complexity" evidence="2">
    <location>
        <begin position="563"/>
        <end position="574"/>
    </location>
</feature>
<feature type="compositionally biased region" description="Low complexity" evidence="2">
    <location>
        <begin position="609"/>
        <end position="619"/>
    </location>
</feature>
<feature type="compositionally biased region" description="Gly residues" evidence="2">
    <location>
        <begin position="654"/>
        <end position="665"/>
    </location>
</feature>
<feature type="compositionally biased region" description="Low complexity" evidence="2">
    <location>
        <begin position="677"/>
        <end position="701"/>
    </location>
</feature>
<feature type="compositionally biased region" description="Polar residues" evidence="2">
    <location>
        <begin position="722"/>
        <end position="733"/>
    </location>
</feature>
<feature type="glycosylation site" description="N-linked (GlcNAc...) asparagine" evidence="1">
    <location>
        <position position="57"/>
    </location>
</feature>
<feature type="glycosylation site" description="N-linked (GlcNAc...) asparagine" evidence="1">
    <location>
        <position position="141"/>
    </location>
</feature>
<feature type="glycosylation site" description="N-linked (GlcNAc...) asparagine" evidence="1">
    <location>
        <position position="187"/>
    </location>
</feature>
<feature type="glycosylation site" description="N-linked (GlcNAc...) asparagine" evidence="1">
    <location>
        <position position="327"/>
    </location>
</feature>
<feature type="glycosylation site" description="N-linked (GlcNAc...) asparagine" evidence="1">
    <location>
        <position position="447"/>
    </location>
</feature>
<feature type="glycosylation site" description="N-linked (GlcNAc...) asparagine" evidence="1">
    <location>
        <position position="514"/>
    </location>
</feature>
<feature type="glycosylation site" description="N-linked (GlcNAc...) asparagine" evidence="1">
    <location>
        <position position="528"/>
    </location>
</feature>
<feature type="glycosylation site" description="N-linked (GlcNAc...) asparagine" evidence="1">
    <location>
        <position position="611"/>
    </location>
</feature>
<feature type="glycosylation site" description="N-linked (GlcNAc...) asparagine" evidence="1">
    <location>
        <position position="686"/>
    </location>
</feature>
<feature type="glycosylation site" description="N-linked (GlcNAc...) asparagine" evidence="1">
    <location>
        <position position="696"/>
    </location>
</feature>
<feature type="splice variant" id="VSP_034523" description="In isoform 5." evidence="5">
    <location>
        <begin position="18"/>
        <end position="622"/>
    </location>
</feature>
<feature type="splice variant" id="VSP_034524" description="In isoform 4." evidence="6">
    <location>
        <begin position="231"/>
        <end position="622"/>
    </location>
</feature>
<feature type="splice variant" id="VSP_034525" description="In isoform 6." evidence="6">
    <location>
        <begin position="320"/>
        <end position="621"/>
    </location>
</feature>
<feature type="splice variant" id="VSP_034526" description="In isoform 3." evidence="7">
    <location>
        <begin position="470"/>
        <end position="502"/>
    </location>
</feature>
<feature type="sequence conflict" description="In Ref. 4; AAH92073." evidence="8" ref="4">
    <original>GHS</original>
    <variation>DHP</variation>
    <location>
        <begin position="274"/>
        <end position="276"/>
    </location>
</feature>
<feature type="sequence conflict" description="In Ref. 4; AAH92073/AAH55490/AAH69958/AAH49243." evidence="8" ref="4">
    <original>R</original>
    <variation>S</variation>
    <location>
        <position position="629"/>
    </location>
</feature>
<gene>
    <name type="primary">Muc19</name>
    <name type="synonym">Smgc</name>
</gene>
<accession>Q6JHY2</accession>
<accession>A7UN65</accession>
<accession>Q3V1B0</accession>
<accession>Q58E46</accession>
<accession>Q6IS33</accession>
<accession>Q7TNU8</accession>
<accession>Q80ZH6</accession>
<reference key="1">
    <citation type="journal article" date="2004" name="Gene">
        <title>Molecular cloning and characterization of the neonatal rat and mouse submandibular gland protein SMGC.</title>
        <authorList>
            <person name="Zinzen K.M."/>
            <person name="Hand A.R."/>
            <person name="Yankova M."/>
            <person name="Ball W.D."/>
            <person name="Mirels L."/>
        </authorList>
    </citation>
    <scope>NUCLEOTIDE SEQUENCE [MRNA] (ISOFORM 2)</scope>
    <scope>TISSUE SPECIFICITY</scope>
    <scope>GLYCOSYLATION</scope>
    <source>
        <strain>C57BL/6J</strain>
        <tissue>Submandibular gland</tissue>
    </source>
</reference>
<reference key="2">
    <citation type="journal article" date="2004" name="Physiol. Genomics">
        <title>The gene encoding mouse Muc19: cDNA, genomic organization and relationship to Smgc.</title>
        <authorList>
            <person name="Culp D.J."/>
            <person name="Latchney L.R."/>
            <person name="Fallon M.A."/>
            <person name="Denny P.A."/>
            <person name="Denny P.C."/>
            <person name="Couwenhoven R.I."/>
            <person name="Chuang S."/>
        </authorList>
    </citation>
    <scope>NUCLEOTIDE SEQUENCE [MRNA] (ISOFORM 5)</scope>
    <scope>ALTERNATIVE SPLICING (ISOFORMS 1 AND 2)</scope>
    <scope>TISSUE SPECIFICITY</scope>
    <source>
        <strain>NFS</strain>
        <tissue>Sublingual gland</tissue>
    </source>
</reference>
<reference key="3">
    <citation type="journal article" date="2005" name="Science">
        <title>The transcriptional landscape of the mammalian genome.</title>
        <authorList>
            <person name="Carninci P."/>
            <person name="Kasukawa T."/>
            <person name="Katayama S."/>
            <person name="Gough J."/>
            <person name="Frith M.C."/>
            <person name="Maeda N."/>
            <person name="Oyama R."/>
            <person name="Ravasi T."/>
            <person name="Lenhard B."/>
            <person name="Wells C."/>
            <person name="Kodzius R."/>
            <person name="Shimokawa K."/>
            <person name="Bajic V.B."/>
            <person name="Brenner S.E."/>
            <person name="Batalov S."/>
            <person name="Forrest A.R."/>
            <person name="Zavolan M."/>
            <person name="Davis M.J."/>
            <person name="Wilming L.G."/>
            <person name="Aidinis V."/>
            <person name="Allen J.E."/>
            <person name="Ambesi-Impiombato A."/>
            <person name="Apweiler R."/>
            <person name="Aturaliya R.N."/>
            <person name="Bailey T.L."/>
            <person name="Bansal M."/>
            <person name="Baxter L."/>
            <person name="Beisel K.W."/>
            <person name="Bersano T."/>
            <person name="Bono H."/>
            <person name="Chalk A.M."/>
            <person name="Chiu K.P."/>
            <person name="Choudhary V."/>
            <person name="Christoffels A."/>
            <person name="Clutterbuck D.R."/>
            <person name="Crowe M.L."/>
            <person name="Dalla E."/>
            <person name="Dalrymple B.P."/>
            <person name="de Bono B."/>
            <person name="Della Gatta G."/>
            <person name="di Bernardo D."/>
            <person name="Down T."/>
            <person name="Engstrom P."/>
            <person name="Fagiolini M."/>
            <person name="Faulkner G."/>
            <person name="Fletcher C.F."/>
            <person name="Fukushima T."/>
            <person name="Furuno M."/>
            <person name="Futaki S."/>
            <person name="Gariboldi M."/>
            <person name="Georgii-Hemming P."/>
            <person name="Gingeras T.R."/>
            <person name="Gojobori T."/>
            <person name="Green R.E."/>
            <person name="Gustincich S."/>
            <person name="Harbers M."/>
            <person name="Hayashi Y."/>
            <person name="Hensch T.K."/>
            <person name="Hirokawa N."/>
            <person name="Hill D."/>
            <person name="Huminiecki L."/>
            <person name="Iacono M."/>
            <person name="Ikeo K."/>
            <person name="Iwama A."/>
            <person name="Ishikawa T."/>
            <person name="Jakt M."/>
            <person name="Kanapin A."/>
            <person name="Katoh M."/>
            <person name="Kawasawa Y."/>
            <person name="Kelso J."/>
            <person name="Kitamura H."/>
            <person name="Kitano H."/>
            <person name="Kollias G."/>
            <person name="Krishnan S.P."/>
            <person name="Kruger A."/>
            <person name="Kummerfeld S.K."/>
            <person name="Kurochkin I.V."/>
            <person name="Lareau L.F."/>
            <person name="Lazarevic D."/>
            <person name="Lipovich L."/>
            <person name="Liu J."/>
            <person name="Liuni S."/>
            <person name="McWilliam S."/>
            <person name="Madan Babu M."/>
            <person name="Madera M."/>
            <person name="Marchionni L."/>
            <person name="Matsuda H."/>
            <person name="Matsuzawa S."/>
            <person name="Miki H."/>
            <person name="Mignone F."/>
            <person name="Miyake S."/>
            <person name="Morris K."/>
            <person name="Mottagui-Tabar S."/>
            <person name="Mulder N."/>
            <person name="Nakano N."/>
            <person name="Nakauchi H."/>
            <person name="Ng P."/>
            <person name="Nilsson R."/>
            <person name="Nishiguchi S."/>
            <person name="Nishikawa S."/>
            <person name="Nori F."/>
            <person name="Ohara O."/>
            <person name="Okazaki Y."/>
            <person name="Orlando V."/>
            <person name="Pang K.C."/>
            <person name="Pavan W.J."/>
            <person name="Pavesi G."/>
            <person name="Pesole G."/>
            <person name="Petrovsky N."/>
            <person name="Piazza S."/>
            <person name="Reed J."/>
            <person name="Reid J.F."/>
            <person name="Ring B.Z."/>
            <person name="Ringwald M."/>
            <person name="Rost B."/>
            <person name="Ruan Y."/>
            <person name="Salzberg S.L."/>
            <person name="Sandelin A."/>
            <person name="Schneider C."/>
            <person name="Schoenbach C."/>
            <person name="Sekiguchi K."/>
            <person name="Semple C.A."/>
            <person name="Seno S."/>
            <person name="Sessa L."/>
            <person name="Sheng Y."/>
            <person name="Shibata Y."/>
            <person name="Shimada H."/>
            <person name="Shimada K."/>
            <person name="Silva D."/>
            <person name="Sinclair B."/>
            <person name="Sperling S."/>
            <person name="Stupka E."/>
            <person name="Sugiura K."/>
            <person name="Sultana R."/>
            <person name="Takenaka Y."/>
            <person name="Taki K."/>
            <person name="Tammoja K."/>
            <person name="Tan S.L."/>
            <person name="Tang S."/>
            <person name="Taylor M.S."/>
            <person name="Tegner J."/>
            <person name="Teichmann S.A."/>
            <person name="Ueda H.R."/>
            <person name="van Nimwegen E."/>
            <person name="Verardo R."/>
            <person name="Wei C.L."/>
            <person name="Yagi K."/>
            <person name="Yamanishi H."/>
            <person name="Zabarovsky E."/>
            <person name="Zhu S."/>
            <person name="Zimmer A."/>
            <person name="Hide W."/>
            <person name="Bult C."/>
            <person name="Grimmond S.M."/>
            <person name="Teasdale R.D."/>
            <person name="Liu E.T."/>
            <person name="Brusic V."/>
            <person name="Quackenbush J."/>
            <person name="Wahlestedt C."/>
            <person name="Mattick J.S."/>
            <person name="Hume D.A."/>
            <person name="Kai C."/>
            <person name="Sasaki D."/>
            <person name="Tomaru Y."/>
            <person name="Fukuda S."/>
            <person name="Kanamori-Katayama M."/>
            <person name="Suzuki M."/>
            <person name="Aoki J."/>
            <person name="Arakawa T."/>
            <person name="Iida J."/>
            <person name="Imamura K."/>
            <person name="Itoh M."/>
            <person name="Kato T."/>
            <person name="Kawaji H."/>
            <person name="Kawagashira N."/>
            <person name="Kawashima T."/>
            <person name="Kojima M."/>
            <person name="Kondo S."/>
            <person name="Konno H."/>
            <person name="Nakano K."/>
            <person name="Ninomiya N."/>
            <person name="Nishio T."/>
            <person name="Okada M."/>
            <person name="Plessy C."/>
            <person name="Shibata K."/>
            <person name="Shiraki T."/>
            <person name="Suzuki S."/>
            <person name="Tagami M."/>
            <person name="Waki K."/>
            <person name="Watahiki A."/>
            <person name="Okamura-Oho Y."/>
            <person name="Suzuki H."/>
            <person name="Kawai J."/>
            <person name="Hayashizaki Y."/>
        </authorList>
    </citation>
    <scope>NUCLEOTIDE SEQUENCE [LARGE SCALE MRNA] (ISOFORM 3)</scope>
    <source>
        <strain>C57BL/6J</strain>
        <tissue>Head</tissue>
    </source>
</reference>
<reference key="4">
    <citation type="journal article" date="2004" name="Genome Res.">
        <title>The status, quality, and expansion of the NIH full-length cDNA project: the Mammalian Gene Collection (MGC).</title>
        <authorList>
            <consortium name="The MGC Project Team"/>
        </authorList>
    </citation>
    <scope>NUCLEOTIDE SEQUENCE [LARGE SCALE MRNA] (ISOFORM 4)</scope>
    <scope>NUCLEOTIDE SEQUENCE [LARGE SCALE MRNA] OF 47-733 (ISOFORM 6)</scope>
    <scope>NUCLEOTIDE SEQUENCE [LARGE SCALE MRNA] OF 319-733 (ISOFORM 2)</scope>
    <source>
        <strain>FVB/N</strain>
        <tissue>Salivary gland</tissue>
    </source>
</reference>
<name>SMGC_MOUSE</name>
<organism>
    <name type="scientific">Mus musculus</name>
    <name type="common">Mouse</name>
    <dbReference type="NCBI Taxonomy" id="10090"/>
    <lineage>
        <taxon>Eukaryota</taxon>
        <taxon>Metazoa</taxon>
        <taxon>Chordata</taxon>
        <taxon>Craniata</taxon>
        <taxon>Vertebrata</taxon>
        <taxon>Euteleostomi</taxon>
        <taxon>Mammalia</taxon>
        <taxon>Eutheria</taxon>
        <taxon>Euarchontoglires</taxon>
        <taxon>Glires</taxon>
        <taxon>Rodentia</taxon>
        <taxon>Myomorpha</taxon>
        <taxon>Muroidea</taxon>
        <taxon>Muridae</taxon>
        <taxon>Murinae</taxon>
        <taxon>Mus</taxon>
        <taxon>Mus</taxon>
    </lineage>
</organism>
<comment type="subcellular location">
    <subcellularLocation>
        <location evidence="8">Secreted</location>
    </subcellularLocation>
</comment>
<comment type="alternative products">
    <event type="alternative splicing"/>
    <isoform>
        <id>Q6JHY2-1</id>
        <name>2</name>
        <name>Smgc</name>
        <sequence type="displayed"/>
    </isoform>
    <isoform>
        <id>Q6PZE0-1</id>
        <name>1</name>
        <name>Mucin-19</name>
        <sequence type="external"/>
    </isoform>
    <isoform>
        <id>Q6JHY2-2</id>
        <name>3</name>
        <sequence type="described" ref="VSP_034526"/>
    </isoform>
    <isoform>
        <id>Q6JHY2-3</id>
        <name>4</name>
        <sequence type="described" ref="VSP_034524"/>
    </isoform>
    <isoform>
        <id>Q6JHY2-4</id>
        <name>5</name>
        <name>t-Smgc</name>
        <sequence type="described" ref="VSP_034523"/>
    </isoform>
    <isoform>
        <id>Q6JHY2-5</id>
        <name>6</name>
        <sequence type="described" ref="VSP_034525"/>
    </isoform>
    <text>Isoform 1 and isoform 2-6 share the first 17 amino acid residues that correspond to the signal sequence.</text>
</comment>
<comment type="tissue specificity">
    <text evidence="3 4">Detected in terminal tubule cells of the submandibular gland (at protein level). Expressed in submandibular salivary glands of 3-day-old males but not adults. Expression in adult submandibular glands is restricted to females. Isoform 5 is expressed in both 3-day-old and adult sublingual glands.</text>
</comment>
<comment type="PTM">
    <text evidence="3">N-glycosylated.</text>
</comment>
<comment type="sequence caution" evidence="8">
    <conflict type="erroneous initiation">
        <sequence resource="EMBL-CDS" id="AAH55490"/>
    </conflict>
</comment>
<comment type="online information" name="Mucin database">
    <link uri="http://www.medkem.gu.se/mucinbiology/databases/"/>
</comment>
<evidence type="ECO:0000255" key="1"/>
<evidence type="ECO:0000256" key="2">
    <source>
        <dbReference type="SAM" id="MobiDB-lite"/>
    </source>
</evidence>
<evidence type="ECO:0000269" key="3">
    <source>
    </source>
</evidence>
<evidence type="ECO:0000269" key="4">
    <source>
    </source>
</evidence>
<evidence type="ECO:0000303" key="5">
    <source>
    </source>
</evidence>
<evidence type="ECO:0000303" key="6">
    <source>
    </source>
</evidence>
<evidence type="ECO:0000303" key="7">
    <source>
    </source>
</evidence>
<evidence type="ECO:0000305" key="8"/>
<protein>
    <recommendedName>
        <fullName>Submandibular gland protein C</fullName>
    </recommendedName>
</protein>